<feature type="chain" id="PRO_0000295905" description="ATP-dependent Clp protease proteolytic subunit">
    <location>
        <begin position="1"/>
        <end position="195"/>
    </location>
</feature>
<feature type="active site" description="Nucleophile" evidence="1">
    <location>
        <position position="101"/>
    </location>
</feature>
<feature type="active site" evidence="1">
    <location>
        <position position="126"/>
    </location>
</feature>
<keyword id="KW-0150">Chloroplast</keyword>
<keyword id="KW-0378">Hydrolase</keyword>
<keyword id="KW-0934">Plastid</keyword>
<keyword id="KW-0645">Protease</keyword>
<keyword id="KW-0720">Serine protease</keyword>
<geneLocation type="chloroplast"/>
<accession>Q06J25</accession>
<proteinExistence type="inferred from homology"/>
<dbReference type="EC" id="3.4.21.92" evidence="1"/>
<dbReference type="EMBL" id="DQ851108">
    <property type="protein sequence ID" value="ABG91434.1"/>
    <property type="molecule type" value="Genomic_DNA"/>
</dbReference>
<dbReference type="RefSeq" id="YP_778602.1">
    <property type="nucleotide sequence ID" value="NC_008408.1"/>
</dbReference>
<dbReference type="SMR" id="Q06J25"/>
<dbReference type="MEROPS" id="S14.002"/>
<dbReference type="GeneID" id="4353019"/>
<dbReference type="GO" id="GO:0009570">
    <property type="term" value="C:chloroplast stroma"/>
    <property type="evidence" value="ECO:0007669"/>
    <property type="project" value="UniProtKB-SubCell"/>
</dbReference>
<dbReference type="GO" id="GO:0009368">
    <property type="term" value="C:endopeptidase Clp complex"/>
    <property type="evidence" value="ECO:0007669"/>
    <property type="project" value="TreeGrafter"/>
</dbReference>
<dbReference type="GO" id="GO:0004176">
    <property type="term" value="F:ATP-dependent peptidase activity"/>
    <property type="evidence" value="ECO:0007669"/>
    <property type="project" value="InterPro"/>
</dbReference>
<dbReference type="GO" id="GO:0051117">
    <property type="term" value="F:ATPase binding"/>
    <property type="evidence" value="ECO:0007669"/>
    <property type="project" value="TreeGrafter"/>
</dbReference>
<dbReference type="GO" id="GO:0004252">
    <property type="term" value="F:serine-type endopeptidase activity"/>
    <property type="evidence" value="ECO:0007669"/>
    <property type="project" value="UniProtKB-UniRule"/>
</dbReference>
<dbReference type="GO" id="GO:0006515">
    <property type="term" value="P:protein quality control for misfolded or incompletely synthesized proteins"/>
    <property type="evidence" value="ECO:0007669"/>
    <property type="project" value="TreeGrafter"/>
</dbReference>
<dbReference type="CDD" id="cd07017">
    <property type="entry name" value="S14_ClpP_2"/>
    <property type="match status" value="1"/>
</dbReference>
<dbReference type="Gene3D" id="3.90.226.10">
    <property type="entry name" value="2-enoyl-CoA Hydratase, Chain A, domain 1"/>
    <property type="match status" value="1"/>
</dbReference>
<dbReference type="HAMAP" id="MF_00444">
    <property type="entry name" value="ClpP"/>
    <property type="match status" value="1"/>
</dbReference>
<dbReference type="InterPro" id="IPR001907">
    <property type="entry name" value="ClpP"/>
</dbReference>
<dbReference type="InterPro" id="IPR029045">
    <property type="entry name" value="ClpP/crotonase-like_dom_sf"/>
</dbReference>
<dbReference type="InterPro" id="IPR023562">
    <property type="entry name" value="ClpP/TepA"/>
</dbReference>
<dbReference type="InterPro" id="IPR033135">
    <property type="entry name" value="ClpP_His_AS"/>
</dbReference>
<dbReference type="PANTHER" id="PTHR10381">
    <property type="entry name" value="ATP-DEPENDENT CLP PROTEASE PROTEOLYTIC SUBUNIT"/>
    <property type="match status" value="1"/>
</dbReference>
<dbReference type="PANTHER" id="PTHR10381:SF11">
    <property type="entry name" value="ATP-DEPENDENT CLP PROTEASE PROTEOLYTIC SUBUNIT, MITOCHONDRIAL"/>
    <property type="match status" value="1"/>
</dbReference>
<dbReference type="Pfam" id="PF00574">
    <property type="entry name" value="CLP_protease"/>
    <property type="match status" value="1"/>
</dbReference>
<dbReference type="PRINTS" id="PR00127">
    <property type="entry name" value="CLPPROTEASEP"/>
</dbReference>
<dbReference type="SUPFAM" id="SSF52096">
    <property type="entry name" value="ClpP/crotonase"/>
    <property type="match status" value="1"/>
</dbReference>
<dbReference type="PROSITE" id="PS00382">
    <property type="entry name" value="CLP_PROTEASE_HIS"/>
    <property type="match status" value="1"/>
</dbReference>
<sequence>MPIGIPKVLFKESTDTTPQWVDIYTRLYKDRIIFLFQLLDDDFSNQIISMLLHLDSESKEELIYFYINSVGGSVLSGISIYDTMNFINSEIVTLCIGIASSISSLILANGKRTKRFILPHSRVLLHQPIMQVSGQASDILIESEEILRLRRILTKIYIENIDQTISRVARDIDRDCFLSSREAKNYGIVDYILTN</sequence>
<name>CLPP_BIGNA</name>
<evidence type="ECO:0000255" key="1">
    <source>
        <dbReference type="HAMAP-Rule" id="MF_00444"/>
    </source>
</evidence>
<reference key="1">
    <citation type="journal article" date="2007" name="Mol. Biol. Evol.">
        <title>The complete chloroplast genome of the chlorarachniophyte Bigelowiella natans: evidence for independent origins of chlorarachniophyte and euglenid secondary endosymbionts.</title>
        <authorList>
            <person name="Rogers M.B."/>
            <person name="Gilson P.R."/>
            <person name="Su V."/>
            <person name="McFadden G.I."/>
            <person name="Keeling P.J."/>
        </authorList>
    </citation>
    <scope>NUCLEOTIDE SEQUENCE [LARGE SCALE GENOMIC DNA]</scope>
</reference>
<organism>
    <name type="scientific">Bigelowiella natans</name>
    <name type="common">Pedinomonas minutissima</name>
    <name type="synonym">Chlorarachnion sp. (strain CCMP621)</name>
    <dbReference type="NCBI Taxonomy" id="227086"/>
    <lineage>
        <taxon>Eukaryota</taxon>
        <taxon>Sar</taxon>
        <taxon>Rhizaria</taxon>
        <taxon>Cercozoa</taxon>
        <taxon>Chlorarachniophyceae</taxon>
        <taxon>Bigelowiella</taxon>
    </lineage>
</organism>
<comment type="function">
    <text evidence="1">Cleaves peptides in various proteins in a process that requires ATP hydrolysis. Has a chymotrypsin-like activity. Plays a major role in the degradation of misfolded proteins.</text>
</comment>
<comment type="catalytic activity">
    <reaction evidence="1">
        <text>Hydrolysis of proteins to small peptides in the presence of ATP and magnesium. alpha-casein is the usual test substrate. In the absence of ATP, only oligopeptides shorter than five residues are hydrolyzed (such as succinyl-Leu-Tyr-|-NHMec, and Leu-Tyr-Leu-|-Tyr-Trp, in which cleavage of the -Tyr-|-Leu- and -Tyr-|-Trp bonds also occurs).</text>
        <dbReference type="EC" id="3.4.21.92"/>
    </reaction>
</comment>
<comment type="subcellular location">
    <subcellularLocation>
        <location evidence="1">Plastid</location>
        <location evidence="1">Chloroplast stroma</location>
    </subcellularLocation>
</comment>
<comment type="similarity">
    <text evidence="1">Belongs to the peptidase S14 family.</text>
</comment>
<gene>
    <name evidence="1" type="primary">clpP</name>
</gene>
<protein>
    <recommendedName>
        <fullName evidence="1">ATP-dependent Clp protease proteolytic subunit</fullName>
        <ecNumber evidence="1">3.4.21.92</ecNumber>
    </recommendedName>
    <alternativeName>
        <fullName evidence="1">Endopeptidase Clp</fullName>
    </alternativeName>
</protein>